<gene>
    <name type="primary">ATP1A2</name>
</gene>
<protein>
    <recommendedName>
        <fullName>Sodium/potassium-transporting ATPase subunit alpha-2</fullName>
        <shortName>Na(+)/K(+) ATPase alpha-2 subunit</shortName>
        <ecNumber>7.2.2.13</ecNumber>
    </recommendedName>
    <alternativeName>
        <fullName>Sodium pump subunit alpha-2</fullName>
    </alternativeName>
</protein>
<comment type="function">
    <text>This is the catalytic component of the active enzyme, which catalyzes the hydrolysis of ATP coupled with the exchange of sodium and potassium ions across the plasma membrane. This action creates the electrochemical gradient of sodium and potassium ions, providing the energy for active transport of various nutrients.</text>
</comment>
<comment type="catalytic activity">
    <reaction>
        <text>K(+)(out) + Na(+)(in) + ATP + H2O = K(+)(in) + Na(+)(out) + ADP + phosphate + H(+)</text>
        <dbReference type="Rhea" id="RHEA:18353"/>
        <dbReference type="ChEBI" id="CHEBI:15377"/>
        <dbReference type="ChEBI" id="CHEBI:15378"/>
        <dbReference type="ChEBI" id="CHEBI:29101"/>
        <dbReference type="ChEBI" id="CHEBI:29103"/>
        <dbReference type="ChEBI" id="CHEBI:30616"/>
        <dbReference type="ChEBI" id="CHEBI:43474"/>
        <dbReference type="ChEBI" id="CHEBI:456216"/>
        <dbReference type="EC" id="7.2.2.13"/>
    </reaction>
</comment>
<comment type="subunit">
    <text evidence="4">The sodium/potassium-transporting ATPase is composed of a catalytic alpha subunit, an auxiliary non-catalytic beta subunit and an additional regulatory subunit.</text>
</comment>
<comment type="subcellular location">
    <subcellularLocation>
        <location evidence="1">Membrane</location>
        <topology evidence="1">Multi-pass membrane protein</topology>
    </subcellularLocation>
    <subcellularLocation>
        <location evidence="1">Cell membrane</location>
        <topology evidence="1">Multi-pass membrane protein</topology>
    </subcellularLocation>
</comment>
<comment type="similarity">
    <text evidence="4">Belongs to the cation transport ATPase (P-type) (TC 3.A.3) family. Type IIC subfamily.</text>
</comment>
<name>AT1A2_CHICK</name>
<feature type="chain" id="PRO_0000046297" description="Sodium/potassium-transporting ATPase subunit alpha-2">
    <location>
        <begin position="1"/>
        <end position="1017"/>
    </location>
</feature>
<feature type="topological domain" description="Cytoplasmic" evidence="2">
    <location>
        <begin position="1"/>
        <end position="82"/>
    </location>
</feature>
<feature type="transmembrane region" description="Helical" evidence="2">
    <location>
        <begin position="83"/>
        <end position="103"/>
    </location>
</feature>
<feature type="topological domain" description="Extracellular" evidence="2">
    <location>
        <begin position="104"/>
        <end position="126"/>
    </location>
</feature>
<feature type="transmembrane region" description="Helical" evidence="2">
    <location>
        <begin position="127"/>
        <end position="147"/>
    </location>
</feature>
<feature type="topological domain" description="Cytoplasmic" evidence="2">
    <location>
        <begin position="148"/>
        <end position="283"/>
    </location>
</feature>
<feature type="transmembrane region" description="Helical" evidence="2">
    <location>
        <begin position="284"/>
        <end position="303"/>
    </location>
</feature>
<feature type="topological domain" description="Extracellular" evidence="2">
    <location>
        <begin position="304"/>
        <end position="315"/>
    </location>
</feature>
<feature type="transmembrane region" description="Helical" evidence="2">
    <location>
        <begin position="316"/>
        <end position="333"/>
    </location>
</feature>
<feature type="topological domain" description="Cytoplasmic" evidence="2">
    <location>
        <begin position="334"/>
        <end position="766"/>
    </location>
</feature>
<feature type="transmembrane region" description="Helical" evidence="2">
    <location>
        <begin position="767"/>
        <end position="786"/>
    </location>
</feature>
<feature type="topological domain" description="Extracellular" evidence="2">
    <location>
        <begin position="787"/>
        <end position="796"/>
    </location>
</feature>
<feature type="transmembrane region" description="Helical" evidence="2">
    <location>
        <begin position="797"/>
        <end position="817"/>
    </location>
</feature>
<feature type="topological domain" description="Cytoplasmic" evidence="2">
    <location>
        <begin position="818"/>
        <end position="837"/>
    </location>
</feature>
<feature type="transmembrane region" description="Helical" evidence="2">
    <location>
        <begin position="838"/>
        <end position="860"/>
    </location>
</feature>
<feature type="topological domain" description="Extracellular" evidence="2">
    <location>
        <begin position="861"/>
        <end position="912"/>
    </location>
</feature>
<feature type="transmembrane region" description="Helical" evidence="2">
    <location>
        <begin position="913"/>
        <end position="932"/>
    </location>
</feature>
<feature type="topological domain" description="Cytoplasmic" evidence="2">
    <location>
        <begin position="933"/>
        <end position="945"/>
    </location>
</feature>
<feature type="transmembrane region" description="Helical" evidence="2">
    <location>
        <begin position="946"/>
        <end position="964"/>
    </location>
</feature>
<feature type="topological domain" description="Extracellular" evidence="2">
    <location>
        <begin position="965"/>
        <end position="979"/>
    </location>
</feature>
<feature type="transmembrane region" description="Helical" evidence="2">
    <location>
        <begin position="980"/>
        <end position="1000"/>
    </location>
</feature>
<feature type="topological domain" description="Cytoplasmic" evidence="2">
    <location>
        <begin position="1001"/>
        <end position="1017"/>
    </location>
</feature>
<feature type="region of interest" description="Disordered" evidence="3">
    <location>
        <begin position="1"/>
        <end position="31"/>
    </location>
</feature>
<feature type="region of interest" description="Interaction with phosphoinositide-3 kinase" evidence="1">
    <location>
        <begin position="77"/>
        <end position="79"/>
    </location>
</feature>
<feature type="region of interest" description="Disordered" evidence="3">
    <location>
        <begin position="207"/>
        <end position="228"/>
    </location>
</feature>
<feature type="compositionally biased region" description="Polar residues" evidence="3">
    <location>
        <begin position="209"/>
        <end position="224"/>
    </location>
</feature>
<feature type="active site" description="4-aspartylphosphate intermediate" evidence="1">
    <location>
        <position position="371"/>
    </location>
</feature>
<feature type="binding site" evidence="1">
    <location>
        <position position="502"/>
    </location>
    <ligand>
        <name>ATP</name>
        <dbReference type="ChEBI" id="CHEBI:30616"/>
    </ligand>
</feature>
<feature type="binding site" evidence="1">
    <location>
        <position position="711"/>
    </location>
    <ligand>
        <name>Mg(2+)</name>
        <dbReference type="ChEBI" id="CHEBI:18420"/>
    </ligand>
</feature>
<feature type="binding site" evidence="1">
    <location>
        <position position="715"/>
    </location>
    <ligand>
        <name>Mg(2+)</name>
        <dbReference type="ChEBI" id="CHEBI:18420"/>
    </ligand>
</feature>
<feature type="modified residue" description="Phosphoserine; by PKA" evidence="1">
    <location>
        <position position="937"/>
    </location>
</feature>
<evidence type="ECO:0000250" key="1"/>
<evidence type="ECO:0000255" key="2"/>
<evidence type="ECO:0000256" key="3">
    <source>
        <dbReference type="SAM" id="MobiDB-lite"/>
    </source>
</evidence>
<evidence type="ECO:0000305" key="4"/>
<reference key="1">
    <citation type="journal article" date="1990" name="Am. J. Physiol.">
        <title>Stability of Na(+)-K(+)-ATPase alpha-subunit isoforms in evolution.</title>
        <authorList>
            <person name="Takeyasu K."/>
            <person name="Lemas V."/>
            <person name="Fambrough D.M."/>
        </authorList>
    </citation>
    <scope>NUCLEOTIDE SEQUENCE [MRNA]</scope>
</reference>
<proteinExistence type="evidence at transcript level"/>
<dbReference type="EC" id="7.2.2.13"/>
<dbReference type="EMBL" id="M59959">
    <property type="protein sequence ID" value="AAA48981.1"/>
    <property type="molecule type" value="mRNA"/>
</dbReference>
<dbReference type="PIR" id="I50394">
    <property type="entry name" value="A37227"/>
</dbReference>
<dbReference type="RefSeq" id="NP_990807.1">
    <property type="nucleotide sequence ID" value="NM_205476.1"/>
</dbReference>
<dbReference type="SMR" id="P24797"/>
<dbReference type="FunCoup" id="P24797">
    <property type="interactions" value="937"/>
</dbReference>
<dbReference type="GeneID" id="396468"/>
<dbReference type="CTD" id="477"/>
<dbReference type="VEuPathDB" id="HostDB:geneid_396530"/>
<dbReference type="InParanoid" id="P24797"/>
<dbReference type="PhylomeDB" id="P24797"/>
<dbReference type="PRO" id="PR:P24797"/>
<dbReference type="Proteomes" id="UP000000539">
    <property type="component" value="Unassembled WGS sequence"/>
</dbReference>
<dbReference type="GO" id="GO:0042995">
    <property type="term" value="C:cell projection"/>
    <property type="evidence" value="ECO:0000318"/>
    <property type="project" value="GO_Central"/>
</dbReference>
<dbReference type="GO" id="GO:0005737">
    <property type="term" value="C:cytoplasm"/>
    <property type="evidence" value="ECO:0000250"/>
    <property type="project" value="UniProtKB"/>
</dbReference>
<dbReference type="GO" id="GO:0005886">
    <property type="term" value="C:plasma membrane"/>
    <property type="evidence" value="ECO:0000250"/>
    <property type="project" value="UniProtKB"/>
</dbReference>
<dbReference type="GO" id="GO:0005890">
    <property type="term" value="C:sodium:potassium-exchanging ATPase complex"/>
    <property type="evidence" value="ECO:0000318"/>
    <property type="project" value="GO_Central"/>
</dbReference>
<dbReference type="GO" id="GO:0005524">
    <property type="term" value="F:ATP binding"/>
    <property type="evidence" value="ECO:0007669"/>
    <property type="project" value="UniProtKB-KW"/>
</dbReference>
<dbReference type="GO" id="GO:0016887">
    <property type="term" value="F:ATP hydrolysis activity"/>
    <property type="evidence" value="ECO:0007669"/>
    <property type="project" value="InterPro"/>
</dbReference>
<dbReference type="GO" id="GO:0046872">
    <property type="term" value="F:metal ion binding"/>
    <property type="evidence" value="ECO:0007669"/>
    <property type="project" value="UniProtKB-KW"/>
</dbReference>
<dbReference type="GO" id="GO:0005391">
    <property type="term" value="F:P-type sodium:potassium-exchanging transporter activity"/>
    <property type="evidence" value="ECO:0000250"/>
    <property type="project" value="UniProtKB"/>
</dbReference>
<dbReference type="GO" id="GO:0030007">
    <property type="term" value="P:intracellular potassium ion homeostasis"/>
    <property type="evidence" value="ECO:0000318"/>
    <property type="project" value="GO_Central"/>
</dbReference>
<dbReference type="GO" id="GO:0006883">
    <property type="term" value="P:intracellular sodium ion homeostasis"/>
    <property type="evidence" value="ECO:0000318"/>
    <property type="project" value="GO_Central"/>
</dbReference>
<dbReference type="GO" id="GO:0001504">
    <property type="term" value="P:neurotransmitter uptake"/>
    <property type="evidence" value="ECO:0000250"/>
    <property type="project" value="AgBase"/>
</dbReference>
<dbReference type="GO" id="GO:1990573">
    <property type="term" value="P:potassium ion import across plasma membrane"/>
    <property type="evidence" value="ECO:0000318"/>
    <property type="project" value="GO_Central"/>
</dbReference>
<dbReference type="GO" id="GO:1902600">
    <property type="term" value="P:proton transmembrane transport"/>
    <property type="evidence" value="ECO:0000318"/>
    <property type="project" value="GO_Central"/>
</dbReference>
<dbReference type="GO" id="GO:0006942">
    <property type="term" value="P:regulation of striated muscle contraction"/>
    <property type="evidence" value="ECO:0000250"/>
    <property type="project" value="AgBase"/>
</dbReference>
<dbReference type="GO" id="GO:0036376">
    <property type="term" value="P:sodium ion export across plasma membrane"/>
    <property type="evidence" value="ECO:0000318"/>
    <property type="project" value="GO_Central"/>
</dbReference>
<dbReference type="CDD" id="cd02608">
    <property type="entry name" value="P-type_ATPase_Na-K_like"/>
    <property type="match status" value="1"/>
</dbReference>
<dbReference type="FunFam" id="2.70.150.10:FF:000106">
    <property type="entry name" value="Sodium/potassium-transporting ATPase subunit alpha"/>
    <property type="match status" value="1"/>
</dbReference>
<dbReference type="FunFam" id="3.40.1110.10:FF:000001">
    <property type="entry name" value="Sodium/potassium-transporting ATPase subunit alpha"/>
    <property type="match status" value="1"/>
</dbReference>
<dbReference type="FunFam" id="3.40.50.1000:FF:000004">
    <property type="entry name" value="Sodium/potassium-transporting ATPase subunit alpha"/>
    <property type="match status" value="1"/>
</dbReference>
<dbReference type="FunFam" id="1.20.1110.10:FF:000095">
    <property type="entry name" value="Sodium/potassium-transporting ATPase subunit alpha-1"/>
    <property type="match status" value="2"/>
</dbReference>
<dbReference type="Gene3D" id="3.40.1110.10">
    <property type="entry name" value="Calcium-transporting ATPase, cytoplasmic domain N"/>
    <property type="match status" value="1"/>
</dbReference>
<dbReference type="Gene3D" id="2.70.150.10">
    <property type="entry name" value="Calcium-transporting ATPase, cytoplasmic transduction domain A"/>
    <property type="match status" value="1"/>
</dbReference>
<dbReference type="Gene3D" id="1.20.1110.10">
    <property type="entry name" value="Calcium-transporting ATPase, transmembrane domain"/>
    <property type="match status" value="1"/>
</dbReference>
<dbReference type="Gene3D" id="3.40.50.1000">
    <property type="entry name" value="HAD superfamily/HAD-like"/>
    <property type="match status" value="1"/>
</dbReference>
<dbReference type="InterPro" id="IPR006068">
    <property type="entry name" value="ATPase_P-typ_cation-transptr_C"/>
</dbReference>
<dbReference type="InterPro" id="IPR004014">
    <property type="entry name" value="ATPase_P-typ_cation-transptr_N"/>
</dbReference>
<dbReference type="InterPro" id="IPR023299">
    <property type="entry name" value="ATPase_P-typ_cyto_dom_N"/>
</dbReference>
<dbReference type="InterPro" id="IPR018303">
    <property type="entry name" value="ATPase_P-typ_P_site"/>
</dbReference>
<dbReference type="InterPro" id="IPR023298">
    <property type="entry name" value="ATPase_P-typ_TM_dom_sf"/>
</dbReference>
<dbReference type="InterPro" id="IPR008250">
    <property type="entry name" value="ATPase_P-typ_transduc_dom_A_sf"/>
</dbReference>
<dbReference type="InterPro" id="IPR050510">
    <property type="entry name" value="Cation_transp_ATPase_P-type"/>
</dbReference>
<dbReference type="InterPro" id="IPR036412">
    <property type="entry name" value="HAD-like_sf"/>
</dbReference>
<dbReference type="InterPro" id="IPR023214">
    <property type="entry name" value="HAD_sf"/>
</dbReference>
<dbReference type="InterPro" id="IPR005775">
    <property type="entry name" value="P-type_ATPase_IIC"/>
</dbReference>
<dbReference type="InterPro" id="IPR001757">
    <property type="entry name" value="P_typ_ATPase"/>
</dbReference>
<dbReference type="InterPro" id="IPR044492">
    <property type="entry name" value="P_typ_ATPase_HD_dom"/>
</dbReference>
<dbReference type="NCBIfam" id="TIGR01106">
    <property type="entry name" value="ATPase-IIC_X-K"/>
    <property type="match status" value="1"/>
</dbReference>
<dbReference type="NCBIfam" id="TIGR01494">
    <property type="entry name" value="ATPase_P-type"/>
    <property type="match status" value="2"/>
</dbReference>
<dbReference type="PANTHER" id="PTHR43294">
    <property type="entry name" value="SODIUM/POTASSIUM-TRANSPORTING ATPASE SUBUNIT ALPHA"/>
    <property type="match status" value="1"/>
</dbReference>
<dbReference type="PANTHER" id="PTHR43294:SF6">
    <property type="entry name" value="SODIUM_POTASSIUM-TRANSPORTING ATPASE SUBUNIT ALPHA-2"/>
    <property type="match status" value="1"/>
</dbReference>
<dbReference type="Pfam" id="PF13246">
    <property type="entry name" value="Cation_ATPase"/>
    <property type="match status" value="1"/>
</dbReference>
<dbReference type="Pfam" id="PF00689">
    <property type="entry name" value="Cation_ATPase_C"/>
    <property type="match status" value="1"/>
</dbReference>
<dbReference type="Pfam" id="PF00690">
    <property type="entry name" value="Cation_ATPase_N"/>
    <property type="match status" value="1"/>
</dbReference>
<dbReference type="Pfam" id="PF00122">
    <property type="entry name" value="E1-E2_ATPase"/>
    <property type="match status" value="1"/>
</dbReference>
<dbReference type="Pfam" id="PF00702">
    <property type="entry name" value="Hydrolase"/>
    <property type="match status" value="1"/>
</dbReference>
<dbReference type="PRINTS" id="PR00119">
    <property type="entry name" value="CATATPASE"/>
</dbReference>
<dbReference type="PRINTS" id="PR00121">
    <property type="entry name" value="NAKATPASE"/>
</dbReference>
<dbReference type="SFLD" id="SFLDS00003">
    <property type="entry name" value="Haloacid_Dehalogenase"/>
    <property type="match status" value="1"/>
</dbReference>
<dbReference type="SFLD" id="SFLDF00027">
    <property type="entry name" value="p-type_atpase"/>
    <property type="match status" value="1"/>
</dbReference>
<dbReference type="SMART" id="SM00831">
    <property type="entry name" value="Cation_ATPase_N"/>
    <property type="match status" value="1"/>
</dbReference>
<dbReference type="SUPFAM" id="SSF81653">
    <property type="entry name" value="Calcium ATPase, transduction domain A"/>
    <property type="match status" value="1"/>
</dbReference>
<dbReference type="SUPFAM" id="SSF81665">
    <property type="entry name" value="Calcium ATPase, transmembrane domain M"/>
    <property type="match status" value="1"/>
</dbReference>
<dbReference type="SUPFAM" id="SSF56784">
    <property type="entry name" value="HAD-like"/>
    <property type="match status" value="1"/>
</dbReference>
<dbReference type="SUPFAM" id="SSF81660">
    <property type="entry name" value="Metal cation-transporting ATPase, ATP-binding domain N"/>
    <property type="match status" value="1"/>
</dbReference>
<dbReference type="PROSITE" id="PS00154">
    <property type="entry name" value="ATPASE_E1_E2"/>
    <property type="match status" value="1"/>
</dbReference>
<accession>P24797</accession>
<organism>
    <name type="scientific">Gallus gallus</name>
    <name type="common">Chicken</name>
    <dbReference type="NCBI Taxonomy" id="9031"/>
    <lineage>
        <taxon>Eukaryota</taxon>
        <taxon>Metazoa</taxon>
        <taxon>Chordata</taxon>
        <taxon>Craniata</taxon>
        <taxon>Vertebrata</taxon>
        <taxon>Euteleostomi</taxon>
        <taxon>Archelosauria</taxon>
        <taxon>Archosauria</taxon>
        <taxon>Dinosauria</taxon>
        <taxon>Saurischia</taxon>
        <taxon>Theropoda</taxon>
        <taxon>Coelurosauria</taxon>
        <taxon>Aves</taxon>
        <taxon>Neognathae</taxon>
        <taxon>Galloanserae</taxon>
        <taxon>Galliformes</taxon>
        <taxon>Phasianidae</taxon>
        <taxon>Phasianinae</taxon>
        <taxon>Gallus</taxon>
    </lineage>
</organism>
<keyword id="KW-0067">ATP-binding</keyword>
<keyword id="KW-1003">Cell membrane</keyword>
<keyword id="KW-0406">Ion transport</keyword>
<keyword id="KW-0460">Magnesium</keyword>
<keyword id="KW-0472">Membrane</keyword>
<keyword id="KW-0479">Metal-binding</keyword>
<keyword id="KW-0547">Nucleotide-binding</keyword>
<keyword id="KW-0597">Phosphoprotein</keyword>
<keyword id="KW-0630">Potassium</keyword>
<keyword id="KW-0633">Potassium transport</keyword>
<keyword id="KW-1185">Reference proteome</keyword>
<keyword id="KW-0915">Sodium</keyword>
<keyword id="KW-0739">Sodium transport</keyword>
<keyword id="KW-0740">Sodium/potassium transport</keyword>
<keyword id="KW-1278">Translocase</keyword>
<keyword id="KW-0812">Transmembrane</keyword>
<keyword id="KW-1133">Transmembrane helix</keyword>
<keyword id="KW-0813">Transport</keyword>
<sequence length="1017" mass="112051">MDGREYSPAATTSENGGGRRKQKEKELDELKKEVNLDDHKLSLDELGRKYQVDLSRGLSNARAAEVLAQDGPNALTPPPTTPEWVKFCRQLFGGFSILLWIGAILCFLAYGIQAAMEDEPSNDNLYLGVVLAAVVIVTGCFSYYQEAKSSKIMDSFKNMVPQQALVIREGEKIQINAENVVVGDLVEVKGGDRVPADMRIISSHGCKVDNSSLTGESEPQTRSPEFTHENPLETRNICFFSTNCVEGTARGIVISTGDRTVMGRIASLASGLEVGRTPIAMEIEHFIRLITGVAVFLGLSFFILSLILGYTWLEAVIFLIGIIVANVPEGLLATVTVCLTLTAKRMARKNCLVKNLEAVETLGSTSTICSDKTGTLTQNRMTVAHMWFDNQIHEADTTEDQSGATFDKRSPTWAALSRIAGLCNRAVFKPGQENISISKRDTAGDASESALLKCIQLSCGSVKKMRDKNPKVTEIPFNSTNKYQLSIHEREEDPQGHILVMKGAPERILERCSRILLQGQEVPLDEEMKEAFQNAYLELGGLGERVLGFCHLYLPPDKFPRGFRFDADEVNFPTSDLCFVGLMSMIDPPRAAVPDAVGKCRSAGIKVIMVTGDHPITAKAIAKGVGIISEGNETVEDIAARLNIPVSQVNPREAKACVVHGSDLKDMTAEQLDEILRNHTEIVFARTSPQQKLIIVEGCQRQGAIVAVTGDGVNDSPALKKADIGIAMGIAGSDVSKQAADMILLDDNFASIVTGVEEGRLIFDNLKKSIAYTLTSNIPEITPFLLFIIANIPLPLGTVTILCIDLGTDMVPAISLAYEAAESDIMKRQPRNPRTDKLVNERLISMAYGQIGMIQALGGFFTYFVILAENGFLPARLLGVRLAWDDRSTNDLEDSYGQEWTYEQRKVVEFTCHTAFFASIVVVQWADLIICKTRRNSVFQQGMKNKILIFGLLEETALAAFLSYCPGMGVALRMYPLKVTWWFCAFPYSLLIFAYDEVRKLILRRYPGGWVEKETYY</sequence>